<keyword id="KW-0021">Allosteric enzyme</keyword>
<keyword id="KW-0963">Cytoplasm</keyword>
<keyword id="KW-0378">Hydrolase</keyword>
<keyword id="KW-0479">Metal-binding</keyword>
<keyword id="KW-0645">Protease</keyword>
<keyword id="KW-0915">Sodium</keyword>
<keyword id="KW-0346">Stress response</keyword>
<keyword id="KW-0888">Threonine protease</keyword>
<name>HSLV_ECOBW</name>
<accession>C5A099</accession>
<dbReference type="EC" id="3.4.25.2" evidence="1"/>
<dbReference type="EMBL" id="CP001396">
    <property type="protein sequence ID" value="ACR63980.1"/>
    <property type="molecule type" value="Genomic_DNA"/>
</dbReference>
<dbReference type="RefSeq" id="WP_000208242.1">
    <property type="nucleotide sequence ID" value="NC_012759.1"/>
</dbReference>
<dbReference type="SMR" id="C5A099"/>
<dbReference type="MEROPS" id="T01.006"/>
<dbReference type="GeneID" id="93777966"/>
<dbReference type="KEGG" id="ebw:BWG_3601"/>
<dbReference type="HOGENOM" id="CLU_093872_1_0_6"/>
<dbReference type="GO" id="GO:0009376">
    <property type="term" value="C:HslUV protease complex"/>
    <property type="evidence" value="ECO:0007669"/>
    <property type="project" value="UniProtKB-UniRule"/>
</dbReference>
<dbReference type="GO" id="GO:0005839">
    <property type="term" value="C:proteasome core complex"/>
    <property type="evidence" value="ECO:0007669"/>
    <property type="project" value="InterPro"/>
</dbReference>
<dbReference type="GO" id="GO:0046872">
    <property type="term" value="F:metal ion binding"/>
    <property type="evidence" value="ECO:0007669"/>
    <property type="project" value="UniProtKB-KW"/>
</dbReference>
<dbReference type="GO" id="GO:0004298">
    <property type="term" value="F:threonine-type endopeptidase activity"/>
    <property type="evidence" value="ECO:0007669"/>
    <property type="project" value="UniProtKB-KW"/>
</dbReference>
<dbReference type="GO" id="GO:0051603">
    <property type="term" value="P:proteolysis involved in protein catabolic process"/>
    <property type="evidence" value="ECO:0007669"/>
    <property type="project" value="InterPro"/>
</dbReference>
<dbReference type="CDD" id="cd01913">
    <property type="entry name" value="protease_HslV"/>
    <property type="match status" value="1"/>
</dbReference>
<dbReference type="FunFam" id="3.60.20.10:FF:000002">
    <property type="entry name" value="ATP-dependent protease subunit HslV"/>
    <property type="match status" value="1"/>
</dbReference>
<dbReference type="Gene3D" id="3.60.20.10">
    <property type="entry name" value="Glutamine Phosphoribosylpyrophosphate, subunit 1, domain 1"/>
    <property type="match status" value="1"/>
</dbReference>
<dbReference type="HAMAP" id="MF_00248">
    <property type="entry name" value="HslV"/>
    <property type="match status" value="1"/>
</dbReference>
<dbReference type="InterPro" id="IPR022281">
    <property type="entry name" value="ATP-dep_Prtase_HsIV_su"/>
</dbReference>
<dbReference type="InterPro" id="IPR029055">
    <property type="entry name" value="Ntn_hydrolases_N"/>
</dbReference>
<dbReference type="InterPro" id="IPR001353">
    <property type="entry name" value="Proteasome_sua/b"/>
</dbReference>
<dbReference type="InterPro" id="IPR023333">
    <property type="entry name" value="Proteasome_suB-type"/>
</dbReference>
<dbReference type="NCBIfam" id="TIGR03692">
    <property type="entry name" value="ATP_dep_HslV"/>
    <property type="match status" value="1"/>
</dbReference>
<dbReference type="NCBIfam" id="NF003964">
    <property type="entry name" value="PRK05456.1"/>
    <property type="match status" value="1"/>
</dbReference>
<dbReference type="PANTHER" id="PTHR32194:SF0">
    <property type="entry name" value="ATP-DEPENDENT PROTEASE SUBUNIT HSLV"/>
    <property type="match status" value="1"/>
</dbReference>
<dbReference type="PANTHER" id="PTHR32194">
    <property type="entry name" value="METALLOPROTEASE TLDD"/>
    <property type="match status" value="1"/>
</dbReference>
<dbReference type="Pfam" id="PF00227">
    <property type="entry name" value="Proteasome"/>
    <property type="match status" value="1"/>
</dbReference>
<dbReference type="PIRSF" id="PIRSF039093">
    <property type="entry name" value="HslV"/>
    <property type="match status" value="1"/>
</dbReference>
<dbReference type="SUPFAM" id="SSF56235">
    <property type="entry name" value="N-terminal nucleophile aminohydrolases (Ntn hydrolases)"/>
    <property type="match status" value="1"/>
</dbReference>
<dbReference type="PROSITE" id="PS51476">
    <property type="entry name" value="PROTEASOME_BETA_2"/>
    <property type="match status" value="1"/>
</dbReference>
<sequence>MTTIVSVRRNGHVVIAGDGQATLGNTVMKGNVKKVRRLYNDKVIAGFAGGTADAFTLFELFERKLEMHQGHLVKAAVELAKDWRTDRMLRKLEALLAVADETASLIITGNGDVVQPENDLIAIGSGGPYAQAAARALLENTELSAREIAEKALDIAGDICIYTNHFHTIEELSYKA</sequence>
<proteinExistence type="inferred from homology"/>
<evidence type="ECO:0000255" key="1">
    <source>
        <dbReference type="HAMAP-Rule" id="MF_00248"/>
    </source>
</evidence>
<comment type="function">
    <text evidence="1">Protease subunit of a proteasome-like degradation complex believed to be a general protein degrading machinery.</text>
</comment>
<comment type="catalytic activity">
    <reaction evidence="1">
        <text>ATP-dependent cleavage of peptide bonds with broad specificity.</text>
        <dbReference type="EC" id="3.4.25.2"/>
    </reaction>
</comment>
<comment type="activity regulation">
    <text evidence="1">Allosterically activated by HslU binding.</text>
</comment>
<comment type="subunit">
    <text evidence="1">A double ring-shaped homohexamer of HslV is capped on each side by a ring-shaped HslU homohexamer. The assembly of the HslU/HslV complex is dependent on binding of ATP.</text>
</comment>
<comment type="subcellular location">
    <subcellularLocation>
        <location evidence="1">Cytoplasm</location>
    </subcellularLocation>
</comment>
<comment type="induction">
    <text evidence="1">By heat shock.</text>
</comment>
<comment type="similarity">
    <text evidence="1">Belongs to the peptidase T1B family. HslV subfamily.</text>
</comment>
<feature type="chain" id="PRO_1000204504" description="ATP-dependent protease subunit HslV">
    <location>
        <begin position="1"/>
        <end position="176"/>
    </location>
</feature>
<feature type="active site" evidence="1">
    <location>
        <position position="2"/>
    </location>
</feature>
<feature type="binding site" evidence="1">
    <location>
        <position position="157"/>
    </location>
    <ligand>
        <name>Na(+)</name>
        <dbReference type="ChEBI" id="CHEBI:29101"/>
    </ligand>
</feature>
<feature type="binding site" evidence="1">
    <location>
        <position position="160"/>
    </location>
    <ligand>
        <name>Na(+)</name>
        <dbReference type="ChEBI" id="CHEBI:29101"/>
    </ligand>
</feature>
<feature type="binding site" evidence="1">
    <location>
        <position position="163"/>
    </location>
    <ligand>
        <name>Na(+)</name>
        <dbReference type="ChEBI" id="CHEBI:29101"/>
    </ligand>
</feature>
<organism>
    <name type="scientific">Escherichia coli (strain K12 / MC4100 / BW2952)</name>
    <dbReference type="NCBI Taxonomy" id="595496"/>
    <lineage>
        <taxon>Bacteria</taxon>
        <taxon>Pseudomonadati</taxon>
        <taxon>Pseudomonadota</taxon>
        <taxon>Gammaproteobacteria</taxon>
        <taxon>Enterobacterales</taxon>
        <taxon>Enterobacteriaceae</taxon>
        <taxon>Escherichia</taxon>
    </lineage>
</organism>
<reference key="1">
    <citation type="journal article" date="2009" name="J. Bacteriol.">
        <title>Genomic sequencing reveals regulatory mutations and recombinational events in the widely used MC4100 lineage of Escherichia coli K-12.</title>
        <authorList>
            <person name="Ferenci T."/>
            <person name="Zhou Z."/>
            <person name="Betteridge T."/>
            <person name="Ren Y."/>
            <person name="Liu Y."/>
            <person name="Feng L."/>
            <person name="Reeves P.R."/>
            <person name="Wang L."/>
        </authorList>
    </citation>
    <scope>NUCLEOTIDE SEQUENCE [LARGE SCALE GENOMIC DNA]</scope>
    <source>
        <strain>K12 / MC4100 / BW2952</strain>
    </source>
</reference>
<gene>
    <name evidence="1" type="primary">hslV</name>
    <name type="ordered locus">BWG_3601</name>
</gene>
<protein>
    <recommendedName>
        <fullName evidence="1">ATP-dependent protease subunit HslV</fullName>
        <ecNumber evidence="1">3.4.25.2</ecNumber>
    </recommendedName>
    <alternativeName>
        <fullName evidence="1">Heat shock protein HslV</fullName>
    </alternativeName>
</protein>